<accession>Q44560</accession>
<dbReference type="EMBL" id="BA000019">
    <property type="protein sequence ID" value="BAB72698.1"/>
    <property type="molecule type" value="Genomic_DNA"/>
</dbReference>
<dbReference type="PIR" id="AC1899">
    <property type="entry name" value="AC1899"/>
</dbReference>
<dbReference type="PIR" id="I39621">
    <property type="entry name" value="I39621"/>
</dbReference>
<dbReference type="RefSeq" id="WP_010994915.1">
    <property type="nucleotide sequence ID" value="NZ_RSCN01000006.1"/>
</dbReference>
<dbReference type="BMRB" id="Q44560"/>
<dbReference type="SMR" id="Q44560"/>
<dbReference type="STRING" id="103690.gene:10492752"/>
<dbReference type="KEGG" id="ana:alr0741"/>
<dbReference type="eggNOG" id="COG0724">
    <property type="taxonomic scope" value="Bacteria"/>
</dbReference>
<dbReference type="OrthoDB" id="489949at2"/>
<dbReference type="Proteomes" id="UP000002483">
    <property type="component" value="Chromosome"/>
</dbReference>
<dbReference type="GO" id="GO:0003723">
    <property type="term" value="F:RNA binding"/>
    <property type="evidence" value="ECO:0007669"/>
    <property type="project" value="UniProtKB-KW"/>
</dbReference>
<dbReference type="FunFam" id="3.30.70.330:FF:001284">
    <property type="entry name" value="RNA-binding protein"/>
    <property type="match status" value="1"/>
</dbReference>
<dbReference type="Gene3D" id="3.30.70.330">
    <property type="match status" value="1"/>
</dbReference>
<dbReference type="InterPro" id="IPR012677">
    <property type="entry name" value="Nucleotide-bd_a/b_plait_sf"/>
</dbReference>
<dbReference type="InterPro" id="IPR035979">
    <property type="entry name" value="RBD_domain_sf"/>
</dbReference>
<dbReference type="InterPro" id="IPR000504">
    <property type="entry name" value="RRM_dom"/>
</dbReference>
<dbReference type="InterPro" id="IPR052462">
    <property type="entry name" value="SLIRP/GR-RBP-like"/>
</dbReference>
<dbReference type="PANTHER" id="PTHR48027">
    <property type="entry name" value="HETEROGENEOUS NUCLEAR RIBONUCLEOPROTEIN 87F-RELATED"/>
    <property type="match status" value="1"/>
</dbReference>
<dbReference type="Pfam" id="PF00076">
    <property type="entry name" value="RRM_1"/>
    <property type="match status" value="1"/>
</dbReference>
<dbReference type="SMART" id="SM00360">
    <property type="entry name" value="RRM"/>
    <property type="match status" value="1"/>
</dbReference>
<dbReference type="SUPFAM" id="SSF54928">
    <property type="entry name" value="RNA-binding domain, RBD"/>
    <property type="match status" value="1"/>
</dbReference>
<dbReference type="PROSITE" id="PS50102">
    <property type="entry name" value="RRM"/>
    <property type="match status" value="1"/>
</dbReference>
<sequence>MSIYVGNLSYEVTQDTLSAVFAEYGTVKRVQLPTDRETGQPRGFGFVEMGSEAEEAAAIEALDGAEWMGRDLKVNKAKPREDRGPSGGNRGGYGGGGGRNRY</sequence>
<reference key="1">
    <citation type="journal article" date="2001" name="DNA Res.">
        <title>Complete genomic sequence of the filamentous nitrogen-fixing cyanobacterium Anabaena sp. strain PCC 7120.</title>
        <authorList>
            <person name="Kaneko T."/>
            <person name="Nakamura Y."/>
            <person name="Wolk C.P."/>
            <person name="Kuritz T."/>
            <person name="Sasamoto S."/>
            <person name="Watanabe A."/>
            <person name="Iriguchi M."/>
            <person name="Ishikawa A."/>
            <person name="Kawashima K."/>
            <person name="Kimura T."/>
            <person name="Kishida Y."/>
            <person name="Kohara M."/>
            <person name="Matsumoto M."/>
            <person name="Matsuno A."/>
            <person name="Muraki A."/>
            <person name="Nakazaki N."/>
            <person name="Shimpo S."/>
            <person name="Sugimoto M."/>
            <person name="Takazawa M."/>
            <person name="Yamada M."/>
            <person name="Yasuda M."/>
            <person name="Tabata S."/>
        </authorList>
    </citation>
    <scope>NUCLEOTIDE SEQUENCE [LARGE SCALE GENOMIC DNA]</scope>
    <source>
        <strain>PCC 7120 / SAG 25.82 / UTEX 2576</strain>
    </source>
</reference>
<evidence type="ECO:0000250" key="1"/>
<evidence type="ECO:0000255" key="2">
    <source>
        <dbReference type="PROSITE-ProRule" id="PRU00176"/>
    </source>
</evidence>
<evidence type="ECO:0000256" key="3">
    <source>
        <dbReference type="SAM" id="MobiDB-lite"/>
    </source>
</evidence>
<organism>
    <name type="scientific">Nostoc sp. (strain PCC 7120 / SAG 25.82 / UTEX 2576)</name>
    <dbReference type="NCBI Taxonomy" id="103690"/>
    <lineage>
        <taxon>Bacteria</taxon>
        <taxon>Bacillati</taxon>
        <taxon>Cyanobacteriota</taxon>
        <taxon>Cyanophyceae</taxon>
        <taxon>Nostocales</taxon>
        <taxon>Nostocaceae</taxon>
        <taxon>Nostoc</taxon>
    </lineage>
</organism>
<protein>
    <recommendedName>
        <fullName>Putative RNA-binding protein RbpA</fullName>
    </recommendedName>
</protein>
<gene>
    <name type="primary">rbpA</name>
    <name type="ordered locus">alr0741</name>
</gene>
<proteinExistence type="inferred from homology"/>
<name>RBPA_NOSS1</name>
<feature type="initiator methionine" description="Removed" evidence="1">
    <location>
        <position position="1"/>
    </location>
</feature>
<feature type="chain" id="PRO_0000262938" description="Putative RNA-binding protein RbpA">
    <location>
        <begin position="2"/>
        <end position="102"/>
    </location>
</feature>
<feature type="domain" description="RRM" evidence="2">
    <location>
        <begin position="2"/>
        <end position="79"/>
    </location>
</feature>
<feature type="region of interest" description="Disordered" evidence="3">
    <location>
        <begin position="73"/>
        <end position="102"/>
    </location>
</feature>
<feature type="compositionally biased region" description="Basic and acidic residues" evidence="3">
    <location>
        <begin position="73"/>
        <end position="84"/>
    </location>
</feature>
<feature type="compositionally biased region" description="Gly residues" evidence="3">
    <location>
        <begin position="85"/>
        <end position="102"/>
    </location>
</feature>
<keyword id="KW-1185">Reference proteome</keyword>
<keyword id="KW-0694">RNA-binding</keyword>